<sequence>MTKTRHLTILGSTGSIGESTLDVVARHPGRYQVVALTADRNVEKMFEQCIQFHPPYAVMLDAQSAEQLEDRLHAAGLDTRVLSGIESLEKVASLPEIDTVMAAIVGAAGIRPTLAAARTGKHILLANKETLVMAGRVFMDTLRQHHATLLPIDSEHNAIFQSLPQHFNGDLAGSGVRRILLTASGGPFRTVDLKILETVTPEQACAHPNWVMGRKISVDSATMMNKGLEVIEAHWLFNAVPEKIQVVIHPQSVIHSMVEYIDGSVLAQLGNPDMRTPIAHALSYPERMESGVQSLDMFKVARLDFESPDFKRFPCLRLAYEALAAGGNMPAVLNAANEVAVEVFLAGRIPFTAIPVMIEDVMKSTERRDVPDLEGVLLADLQARATAREWLACNIRQSTGQPGKPASSLSAGQ</sequence>
<reference key="1">
    <citation type="journal article" date="2003" name="J. Bacteriol.">
        <title>Complete genome sequence of the ammonia-oxidizing bacterium and obligate chemolithoautotroph Nitrosomonas europaea.</title>
        <authorList>
            <person name="Chain P."/>
            <person name="Lamerdin J.E."/>
            <person name="Larimer F.W."/>
            <person name="Regala W."/>
            <person name="Lao V."/>
            <person name="Land M.L."/>
            <person name="Hauser L."/>
            <person name="Hooper A.B."/>
            <person name="Klotz M.G."/>
            <person name="Norton J."/>
            <person name="Sayavedra-Soto L.A."/>
            <person name="Arciero D.M."/>
            <person name="Hommes N.G."/>
            <person name="Whittaker M.M."/>
            <person name="Arp D.J."/>
        </authorList>
    </citation>
    <scope>NUCLEOTIDE SEQUENCE [LARGE SCALE GENOMIC DNA]</scope>
    <source>
        <strain>ATCC 19718 / CIP 103999 / KCTC 2705 / NBRC 14298</strain>
    </source>
</reference>
<organism>
    <name type="scientific">Nitrosomonas europaea (strain ATCC 19718 / CIP 103999 / KCTC 2705 / NBRC 14298)</name>
    <dbReference type="NCBI Taxonomy" id="228410"/>
    <lineage>
        <taxon>Bacteria</taxon>
        <taxon>Pseudomonadati</taxon>
        <taxon>Pseudomonadota</taxon>
        <taxon>Betaproteobacteria</taxon>
        <taxon>Nitrosomonadales</taxon>
        <taxon>Nitrosomonadaceae</taxon>
        <taxon>Nitrosomonas</taxon>
    </lineage>
</organism>
<proteinExistence type="inferred from homology"/>
<comment type="function">
    <text evidence="1">Catalyzes the NADPH-dependent rearrangement and reduction of 1-deoxy-D-xylulose-5-phosphate (DXP) to 2-C-methyl-D-erythritol 4-phosphate (MEP).</text>
</comment>
<comment type="catalytic activity">
    <reaction evidence="1">
        <text>2-C-methyl-D-erythritol 4-phosphate + NADP(+) = 1-deoxy-D-xylulose 5-phosphate + NADPH + H(+)</text>
        <dbReference type="Rhea" id="RHEA:13717"/>
        <dbReference type="ChEBI" id="CHEBI:15378"/>
        <dbReference type="ChEBI" id="CHEBI:57783"/>
        <dbReference type="ChEBI" id="CHEBI:57792"/>
        <dbReference type="ChEBI" id="CHEBI:58262"/>
        <dbReference type="ChEBI" id="CHEBI:58349"/>
        <dbReference type="EC" id="1.1.1.267"/>
    </reaction>
    <physiologicalReaction direction="right-to-left" evidence="1">
        <dbReference type="Rhea" id="RHEA:13719"/>
    </physiologicalReaction>
</comment>
<comment type="cofactor">
    <cofactor evidence="1">
        <name>Mg(2+)</name>
        <dbReference type="ChEBI" id="CHEBI:18420"/>
    </cofactor>
    <cofactor evidence="1">
        <name>Mn(2+)</name>
        <dbReference type="ChEBI" id="CHEBI:29035"/>
    </cofactor>
</comment>
<comment type="pathway">
    <text evidence="1">Isoprenoid biosynthesis; isopentenyl diphosphate biosynthesis via DXP pathway; isopentenyl diphosphate from 1-deoxy-D-xylulose 5-phosphate: step 1/6.</text>
</comment>
<comment type="similarity">
    <text evidence="1">Belongs to the DXR family.</text>
</comment>
<keyword id="KW-0414">Isoprene biosynthesis</keyword>
<keyword id="KW-0464">Manganese</keyword>
<keyword id="KW-0479">Metal-binding</keyword>
<keyword id="KW-0521">NADP</keyword>
<keyword id="KW-0560">Oxidoreductase</keyword>
<keyword id="KW-1185">Reference proteome</keyword>
<feature type="chain" id="PRO_0000163684" description="1-deoxy-D-xylulose 5-phosphate reductoisomerase">
    <location>
        <begin position="1"/>
        <end position="413"/>
    </location>
</feature>
<feature type="binding site" evidence="1">
    <location>
        <position position="13"/>
    </location>
    <ligand>
        <name>NADPH</name>
        <dbReference type="ChEBI" id="CHEBI:57783"/>
    </ligand>
</feature>
<feature type="binding site" evidence="1">
    <location>
        <position position="14"/>
    </location>
    <ligand>
        <name>NADPH</name>
        <dbReference type="ChEBI" id="CHEBI:57783"/>
    </ligand>
</feature>
<feature type="binding site" evidence="1">
    <location>
        <position position="15"/>
    </location>
    <ligand>
        <name>NADPH</name>
        <dbReference type="ChEBI" id="CHEBI:57783"/>
    </ligand>
</feature>
<feature type="binding site" evidence="1">
    <location>
        <position position="16"/>
    </location>
    <ligand>
        <name>NADPH</name>
        <dbReference type="ChEBI" id="CHEBI:57783"/>
    </ligand>
</feature>
<feature type="binding site" evidence="1">
    <location>
        <position position="40"/>
    </location>
    <ligand>
        <name>NADPH</name>
        <dbReference type="ChEBI" id="CHEBI:57783"/>
    </ligand>
</feature>
<feature type="binding site" evidence="1">
    <location>
        <position position="41"/>
    </location>
    <ligand>
        <name>NADPH</name>
        <dbReference type="ChEBI" id="CHEBI:57783"/>
    </ligand>
</feature>
<feature type="binding site" evidence="1">
    <location>
        <position position="127"/>
    </location>
    <ligand>
        <name>NADPH</name>
        <dbReference type="ChEBI" id="CHEBI:57783"/>
    </ligand>
</feature>
<feature type="binding site" evidence="1">
    <location>
        <position position="128"/>
    </location>
    <ligand>
        <name>1-deoxy-D-xylulose 5-phosphate</name>
        <dbReference type="ChEBI" id="CHEBI:57792"/>
    </ligand>
</feature>
<feature type="binding site" evidence="1">
    <location>
        <position position="129"/>
    </location>
    <ligand>
        <name>NADPH</name>
        <dbReference type="ChEBI" id="CHEBI:57783"/>
    </ligand>
</feature>
<feature type="binding site" evidence="1">
    <location>
        <position position="153"/>
    </location>
    <ligand>
        <name>Mn(2+)</name>
        <dbReference type="ChEBI" id="CHEBI:29035"/>
    </ligand>
</feature>
<feature type="binding site" evidence="1">
    <location>
        <position position="154"/>
    </location>
    <ligand>
        <name>1-deoxy-D-xylulose 5-phosphate</name>
        <dbReference type="ChEBI" id="CHEBI:57792"/>
    </ligand>
</feature>
<feature type="binding site" evidence="1">
    <location>
        <position position="155"/>
    </location>
    <ligand>
        <name>1-deoxy-D-xylulose 5-phosphate</name>
        <dbReference type="ChEBI" id="CHEBI:57792"/>
    </ligand>
</feature>
<feature type="binding site" evidence="1">
    <location>
        <position position="155"/>
    </location>
    <ligand>
        <name>Mn(2+)</name>
        <dbReference type="ChEBI" id="CHEBI:29035"/>
    </ligand>
</feature>
<feature type="binding site" evidence="1">
    <location>
        <position position="184"/>
    </location>
    <ligand>
        <name>1-deoxy-D-xylulose 5-phosphate</name>
        <dbReference type="ChEBI" id="CHEBI:57792"/>
    </ligand>
</feature>
<feature type="binding site" evidence="1">
    <location>
        <position position="207"/>
    </location>
    <ligand>
        <name>1-deoxy-D-xylulose 5-phosphate</name>
        <dbReference type="ChEBI" id="CHEBI:57792"/>
    </ligand>
</feature>
<feature type="binding site" evidence="1">
    <location>
        <position position="213"/>
    </location>
    <ligand>
        <name>NADPH</name>
        <dbReference type="ChEBI" id="CHEBI:57783"/>
    </ligand>
</feature>
<feature type="binding site" evidence="1">
    <location>
        <position position="220"/>
    </location>
    <ligand>
        <name>1-deoxy-D-xylulose 5-phosphate</name>
        <dbReference type="ChEBI" id="CHEBI:57792"/>
    </ligand>
</feature>
<feature type="binding site" evidence="1">
    <location>
        <position position="225"/>
    </location>
    <ligand>
        <name>1-deoxy-D-xylulose 5-phosphate</name>
        <dbReference type="ChEBI" id="CHEBI:57792"/>
    </ligand>
</feature>
<feature type="binding site" evidence="1">
    <location>
        <position position="226"/>
    </location>
    <ligand>
        <name>1-deoxy-D-xylulose 5-phosphate</name>
        <dbReference type="ChEBI" id="CHEBI:57792"/>
    </ligand>
</feature>
<feature type="binding site" evidence="1">
    <location>
        <position position="229"/>
    </location>
    <ligand>
        <name>1-deoxy-D-xylulose 5-phosphate</name>
        <dbReference type="ChEBI" id="CHEBI:57792"/>
    </ligand>
</feature>
<feature type="binding site" evidence="1">
    <location>
        <position position="229"/>
    </location>
    <ligand>
        <name>Mn(2+)</name>
        <dbReference type="ChEBI" id="CHEBI:29035"/>
    </ligand>
</feature>
<dbReference type="EC" id="1.1.1.267" evidence="1"/>
<dbReference type="EMBL" id="AL954747">
    <property type="protein sequence ID" value="CAD85623.1"/>
    <property type="molecule type" value="Genomic_DNA"/>
</dbReference>
<dbReference type="SMR" id="Q82U01"/>
<dbReference type="STRING" id="228410.NE1712"/>
<dbReference type="GeneID" id="87104872"/>
<dbReference type="KEGG" id="neu:NE1712"/>
<dbReference type="eggNOG" id="COG0743">
    <property type="taxonomic scope" value="Bacteria"/>
</dbReference>
<dbReference type="HOGENOM" id="CLU_035714_0_1_4"/>
<dbReference type="OrthoDB" id="9806546at2"/>
<dbReference type="PhylomeDB" id="Q82U01"/>
<dbReference type="UniPathway" id="UPA00056">
    <property type="reaction ID" value="UER00092"/>
</dbReference>
<dbReference type="Proteomes" id="UP000001416">
    <property type="component" value="Chromosome"/>
</dbReference>
<dbReference type="GO" id="GO:0030604">
    <property type="term" value="F:1-deoxy-D-xylulose-5-phosphate reductoisomerase activity"/>
    <property type="evidence" value="ECO:0007669"/>
    <property type="project" value="UniProtKB-UniRule"/>
</dbReference>
<dbReference type="GO" id="GO:0030145">
    <property type="term" value="F:manganese ion binding"/>
    <property type="evidence" value="ECO:0007669"/>
    <property type="project" value="TreeGrafter"/>
</dbReference>
<dbReference type="GO" id="GO:0070402">
    <property type="term" value="F:NADPH binding"/>
    <property type="evidence" value="ECO:0007669"/>
    <property type="project" value="InterPro"/>
</dbReference>
<dbReference type="GO" id="GO:0051484">
    <property type="term" value="P:isopentenyl diphosphate biosynthetic process, methylerythritol 4-phosphate pathway involved in terpenoid biosynthetic process"/>
    <property type="evidence" value="ECO:0007669"/>
    <property type="project" value="TreeGrafter"/>
</dbReference>
<dbReference type="FunFam" id="3.40.50.720:FF:000045">
    <property type="entry name" value="1-deoxy-D-xylulose 5-phosphate reductoisomerase"/>
    <property type="match status" value="1"/>
</dbReference>
<dbReference type="Gene3D" id="1.10.1740.10">
    <property type="match status" value="1"/>
</dbReference>
<dbReference type="Gene3D" id="3.40.50.720">
    <property type="entry name" value="NAD(P)-binding Rossmann-like Domain"/>
    <property type="match status" value="1"/>
</dbReference>
<dbReference type="HAMAP" id="MF_00183">
    <property type="entry name" value="DXP_reductoisom"/>
    <property type="match status" value="1"/>
</dbReference>
<dbReference type="InterPro" id="IPR003821">
    <property type="entry name" value="DXP_reductoisomerase"/>
</dbReference>
<dbReference type="InterPro" id="IPR013644">
    <property type="entry name" value="DXP_reductoisomerase_C"/>
</dbReference>
<dbReference type="InterPro" id="IPR013512">
    <property type="entry name" value="DXP_reductoisomerase_N"/>
</dbReference>
<dbReference type="InterPro" id="IPR026877">
    <property type="entry name" value="DXPR_C"/>
</dbReference>
<dbReference type="InterPro" id="IPR036169">
    <property type="entry name" value="DXPR_C_sf"/>
</dbReference>
<dbReference type="InterPro" id="IPR036291">
    <property type="entry name" value="NAD(P)-bd_dom_sf"/>
</dbReference>
<dbReference type="NCBIfam" id="TIGR00243">
    <property type="entry name" value="Dxr"/>
    <property type="match status" value="1"/>
</dbReference>
<dbReference type="NCBIfam" id="NF003938">
    <property type="entry name" value="PRK05447.1-1"/>
    <property type="match status" value="1"/>
</dbReference>
<dbReference type="NCBIfam" id="NF009114">
    <property type="entry name" value="PRK12464.1"/>
    <property type="match status" value="1"/>
</dbReference>
<dbReference type="PANTHER" id="PTHR30525">
    <property type="entry name" value="1-DEOXY-D-XYLULOSE 5-PHOSPHATE REDUCTOISOMERASE"/>
    <property type="match status" value="1"/>
</dbReference>
<dbReference type="PANTHER" id="PTHR30525:SF0">
    <property type="entry name" value="1-DEOXY-D-XYLULOSE 5-PHOSPHATE REDUCTOISOMERASE, CHLOROPLASTIC"/>
    <property type="match status" value="1"/>
</dbReference>
<dbReference type="Pfam" id="PF08436">
    <property type="entry name" value="DXP_redisom_C"/>
    <property type="match status" value="1"/>
</dbReference>
<dbReference type="Pfam" id="PF02670">
    <property type="entry name" value="DXP_reductoisom"/>
    <property type="match status" value="1"/>
</dbReference>
<dbReference type="Pfam" id="PF13288">
    <property type="entry name" value="DXPR_C"/>
    <property type="match status" value="1"/>
</dbReference>
<dbReference type="PIRSF" id="PIRSF006205">
    <property type="entry name" value="Dxp_reductismrs"/>
    <property type="match status" value="1"/>
</dbReference>
<dbReference type="SUPFAM" id="SSF69055">
    <property type="entry name" value="1-deoxy-D-xylulose-5-phosphate reductoisomerase, C-terminal domain"/>
    <property type="match status" value="1"/>
</dbReference>
<dbReference type="SUPFAM" id="SSF55347">
    <property type="entry name" value="Glyceraldehyde-3-phosphate dehydrogenase-like, C-terminal domain"/>
    <property type="match status" value="1"/>
</dbReference>
<dbReference type="SUPFAM" id="SSF51735">
    <property type="entry name" value="NAD(P)-binding Rossmann-fold domains"/>
    <property type="match status" value="1"/>
</dbReference>
<accession>Q82U01</accession>
<gene>
    <name evidence="1" type="primary">dxr</name>
    <name type="ordered locus">NE1712</name>
</gene>
<name>DXR_NITEU</name>
<protein>
    <recommendedName>
        <fullName evidence="1">1-deoxy-D-xylulose 5-phosphate reductoisomerase</fullName>
        <shortName evidence="1">DXP reductoisomerase</shortName>
        <ecNumber evidence="1">1.1.1.267</ecNumber>
    </recommendedName>
    <alternativeName>
        <fullName evidence="1">1-deoxyxylulose-5-phosphate reductoisomerase</fullName>
    </alternativeName>
    <alternativeName>
        <fullName evidence="1">2-C-methyl-D-erythritol 4-phosphate synthase</fullName>
    </alternativeName>
</protein>
<evidence type="ECO:0000255" key="1">
    <source>
        <dbReference type="HAMAP-Rule" id="MF_00183"/>
    </source>
</evidence>